<sequence>MATTSRRFTTGLFASITSVKSHSANRPQSISLIRRNHIDHRLPLIVPSSRRWIIQAARSWDGFDDGAEAEIKKPGAYGYAIGDNEIEGSSSSTVHVIDGEHVKTAEIVIWAAVTAAFGVGNRVMYKLALVPLKEYPFFLAQLSTFGYVAVYYTILYFRYRAGTVTDAMLSVPKSPFLIVGILEALAAAAGMAAAANLSGPSTTVLSQTFLVWQIFFSIIFLGRRYSVNQILGCTLVALGVIVSVASGSGAAHSLNEAGVLWILLMVLSFLLQGAGTVLKEVIFIDSQRRLKGASLDLFIVNSYGSAFQAICIALLLPFLSKLWGIPFNQLGTYLKDGAVCFLNNGTITKGCDGAPFLPLLFVIMNIGYNIALLRLLKISSAVVSCLASTVSVPIAVFLFTMPLPYLGVASSLPKGFMGGTIILVLGMILYSWTPHGANSSHTDSVIPSPPPT</sequence>
<comment type="function">
    <text evidence="2">Involved in thiol transport from the plastid to the cytosol. Transports probably both glutathione (GSH) and its precursor, gamma-glutamylcysteine (gamma-EC). Exhibits some functional redundancy with CLT1 in maintaining the root GSH pool.</text>
</comment>
<comment type="subcellular location">
    <subcellularLocation>
        <location evidence="2">Plastid</location>
        <location evidence="2">Chloroplast membrane</location>
        <topology evidence="1">Multi-pass membrane protein</topology>
    </subcellularLocation>
</comment>
<comment type="disruption phenotype">
    <text evidence="2 3">No visible phenotype. Clt1, clt3 and clt3 triple mutants are more sensitive to Cd(2+), have a decreased level of cytosolic GSH, an altered systemic acquired resistance response and are more sensitive to Phytophthora infection (PubMed:20080670). Clt1, clt3 and clt3 triple mutants have decreased lateral root densities (PubMed:24204368).</text>
</comment>
<comment type="similarity">
    <text evidence="5">Belongs to the CRT-like transporter family.</text>
</comment>
<comment type="sequence caution" evidence="5">
    <conflict type="miscellaneous discrepancy">
        <sequence resource="EMBL-CDS" id="AAT71935"/>
    </conflict>
    <text>Probable intron retention.</text>
</comment>
<comment type="sequence caution" evidence="5">
    <conflict type="miscellaneous discrepancy">
        <sequence resource="EMBL-CDS" id="AAU15152"/>
    </conflict>
    <text>Probable intron retention.</text>
</comment>
<comment type="sequence caution" evidence="5">
    <conflict type="erroneous gene model prediction">
        <sequence resource="EMBL-CDS" id="BAB10034"/>
    </conflict>
</comment>
<comment type="sequence caution" evidence="5">
    <conflict type="erroneous gene model prediction">
        <sequence resource="EMBL-CDS" id="BAB10035"/>
    </conflict>
</comment>
<keyword id="KW-0150">Chloroplast</keyword>
<keyword id="KW-0472">Membrane</keyword>
<keyword id="KW-0934">Plastid</keyword>
<keyword id="KW-1185">Reference proteome</keyword>
<keyword id="KW-0809">Transit peptide</keyword>
<keyword id="KW-0812">Transmembrane</keyword>
<keyword id="KW-1133">Transmembrane helix</keyword>
<keyword id="KW-0813">Transport</keyword>
<gene>
    <name evidence="4" type="primary">CLT3</name>
    <name evidence="6" type="ordered locus">At5g12170</name>
    <name evidence="8" type="ORF">MXC9.12</name>
    <name evidence="9" type="ORF">MXC9.13</name>
</gene>
<dbReference type="EMBL" id="AB007727">
    <property type="protein sequence ID" value="BAB10034.1"/>
    <property type="status" value="ALT_SEQ"/>
    <property type="molecule type" value="Genomic_DNA"/>
</dbReference>
<dbReference type="EMBL" id="AB007727">
    <property type="protein sequence ID" value="BAB10035.1"/>
    <property type="status" value="ALT_SEQ"/>
    <property type="molecule type" value="Genomic_DNA"/>
</dbReference>
<dbReference type="EMBL" id="CP002688">
    <property type="protein sequence ID" value="AED91770.1"/>
    <property type="molecule type" value="Genomic_DNA"/>
</dbReference>
<dbReference type="EMBL" id="AY093019">
    <property type="protein sequence ID" value="AAM13018.1"/>
    <property type="molecule type" value="mRNA"/>
</dbReference>
<dbReference type="EMBL" id="BT015063">
    <property type="protein sequence ID" value="AAT71935.1"/>
    <property type="status" value="ALT_SEQ"/>
    <property type="molecule type" value="mRNA"/>
</dbReference>
<dbReference type="EMBL" id="BT015653">
    <property type="protein sequence ID" value="AAU15152.1"/>
    <property type="status" value="ALT_SEQ"/>
    <property type="molecule type" value="mRNA"/>
</dbReference>
<dbReference type="EMBL" id="AY128939">
    <property type="protein sequence ID" value="AAM91339.1"/>
    <property type="molecule type" value="mRNA"/>
</dbReference>
<dbReference type="EMBL" id="AK176437">
    <property type="protein sequence ID" value="BAD44200.1"/>
    <property type="molecule type" value="mRNA"/>
</dbReference>
<dbReference type="EMBL" id="AY084340">
    <property type="protein sequence ID" value="AAM60923.1"/>
    <property type="molecule type" value="mRNA"/>
</dbReference>
<dbReference type="RefSeq" id="NP_001078575.1">
    <property type="nucleotide sequence ID" value="NM_001085106.2"/>
</dbReference>
<dbReference type="SMR" id="Q8RWL5"/>
<dbReference type="FunCoup" id="Q8RWL5">
    <property type="interactions" value="1"/>
</dbReference>
<dbReference type="STRING" id="3702.Q8RWL5"/>
<dbReference type="GlyGen" id="Q8RWL5">
    <property type="glycosylation" value="1 site"/>
</dbReference>
<dbReference type="PaxDb" id="3702-AT5G12170.2"/>
<dbReference type="ProteomicsDB" id="240986"/>
<dbReference type="EnsemblPlants" id="AT5G12170.2">
    <property type="protein sequence ID" value="AT5G12170.2"/>
    <property type="gene ID" value="AT5G12170"/>
</dbReference>
<dbReference type="GeneID" id="831090"/>
<dbReference type="Gramene" id="AT5G12170.2">
    <property type="protein sequence ID" value="AT5G12170.2"/>
    <property type="gene ID" value="AT5G12170"/>
</dbReference>
<dbReference type="KEGG" id="ath:AT5G12170"/>
<dbReference type="Araport" id="AT5G12170"/>
<dbReference type="TAIR" id="AT5G12170">
    <property type="gene designation" value="CLT3"/>
</dbReference>
<dbReference type="eggNOG" id="ENOG502QR5M">
    <property type="taxonomic scope" value="Eukaryota"/>
</dbReference>
<dbReference type="HOGENOM" id="CLU_038989_2_0_1"/>
<dbReference type="InParanoid" id="Q8RWL5"/>
<dbReference type="OMA" id="FTMPLPY"/>
<dbReference type="PhylomeDB" id="Q8RWL5"/>
<dbReference type="PRO" id="PR:Q8RWL5"/>
<dbReference type="Proteomes" id="UP000006548">
    <property type="component" value="Chromosome 5"/>
</dbReference>
<dbReference type="ExpressionAtlas" id="Q8RWL5">
    <property type="expression patterns" value="baseline and differential"/>
</dbReference>
<dbReference type="GO" id="GO:0031969">
    <property type="term" value="C:chloroplast membrane"/>
    <property type="evidence" value="ECO:0007669"/>
    <property type="project" value="UniProtKB-SubCell"/>
</dbReference>
<dbReference type="GO" id="GO:0009536">
    <property type="term" value="C:plastid"/>
    <property type="evidence" value="ECO:0000314"/>
    <property type="project" value="TAIR"/>
</dbReference>
<dbReference type="GO" id="GO:0002229">
    <property type="term" value="P:defense response to oomycetes"/>
    <property type="evidence" value="ECO:0000316"/>
    <property type="project" value="TAIR"/>
</dbReference>
<dbReference type="GO" id="GO:0034635">
    <property type="term" value="P:glutathione transport"/>
    <property type="evidence" value="ECO:0000314"/>
    <property type="project" value="TAIR"/>
</dbReference>
<dbReference type="GO" id="GO:0046686">
    <property type="term" value="P:response to cadmium ion"/>
    <property type="evidence" value="ECO:0000315"/>
    <property type="project" value="TAIR"/>
</dbReference>
<dbReference type="InterPro" id="IPR013936">
    <property type="entry name" value="CRT-like"/>
</dbReference>
<dbReference type="PANTHER" id="PTHR31326">
    <property type="entry name" value="PROTEIN CLT2, CHLOROPLASTIC"/>
    <property type="match status" value="1"/>
</dbReference>
<dbReference type="PANTHER" id="PTHR31326:SF3">
    <property type="entry name" value="PROTEIN CLT3, CHLOROPLASTIC"/>
    <property type="match status" value="1"/>
</dbReference>
<dbReference type="Pfam" id="PF08627">
    <property type="entry name" value="CRT-like"/>
    <property type="match status" value="1"/>
</dbReference>
<dbReference type="SUPFAM" id="SSF103481">
    <property type="entry name" value="Multidrug resistance efflux transporter EmrE"/>
    <property type="match status" value="1"/>
</dbReference>
<evidence type="ECO:0000255" key="1"/>
<evidence type="ECO:0000269" key="2">
    <source>
    </source>
</evidence>
<evidence type="ECO:0000269" key="3">
    <source>
    </source>
</evidence>
<evidence type="ECO:0000303" key="4">
    <source>
    </source>
</evidence>
<evidence type="ECO:0000305" key="5"/>
<evidence type="ECO:0000312" key="6">
    <source>
        <dbReference type="Araport" id="AT5G12170"/>
    </source>
</evidence>
<evidence type="ECO:0000312" key="7">
    <source>
        <dbReference type="EMBL" id="AAM13018.1"/>
    </source>
</evidence>
<evidence type="ECO:0000312" key="8">
    <source>
        <dbReference type="EMBL" id="BAB10034.1"/>
    </source>
</evidence>
<evidence type="ECO:0000312" key="9">
    <source>
        <dbReference type="EMBL" id="BAB10035.1"/>
    </source>
</evidence>
<organism evidence="7">
    <name type="scientific">Arabidopsis thaliana</name>
    <name type="common">Mouse-ear cress</name>
    <dbReference type="NCBI Taxonomy" id="3702"/>
    <lineage>
        <taxon>Eukaryota</taxon>
        <taxon>Viridiplantae</taxon>
        <taxon>Streptophyta</taxon>
        <taxon>Embryophyta</taxon>
        <taxon>Tracheophyta</taxon>
        <taxon>Spermatophyta</taxon>
        <taxon>Magnoliopsida</taxon>
        <taxon>eudicotyledons</taxon>
        <taxon>Gunneridae</taxon>
        <taxon>Pentapetalae</taxon>
        <taxon>rosids</taxon>
        <taxon>malvids</taxon>
        <taxon>Brassicales</taxon>
        <taxon>Brassicaceae</taxon>
        <taxon>Camelineae</taxon>
        <taxon>Arabidopsis</taxon>
    </lineage>
</organism>
<reference key="1">
    <citation type="journal article" date="1997" name="DNA Res.">
        <title>Structural analysis of Arabidopsis thaliana chromosome 5. III. Sequence features of the regions of 1,191,918 bp covered by seventeen physically assigned P1 clones.</title>
        <authorList>
            <person name="Nakamura Y."/>
            <person name="Sato S."/>
            <person name="Kaneko T."/>
            <person name="Kotani H."/>
            <person name="Asamizu E."/>
            <person name="Miyajima N."/>
            <person name="Tabata S."/>
        </authorList>
    </citation>
    <scope>NUCLEOTIDE SEQUENCE [LARGE SCALE GENOMIC DNA]</scope>
    <source>
        <strain>cv. Columbia</strain>
    </source>
</reference>
<reference key="2">
    <citation type="journal article" date="2017" name="Plant J.">
        <title>Araport11: a complete reannotation of the Arabidopsis thaliana reference genome.</title>
        <authorList>
            <person name="Cheng C.Y."/>
            <person name="Krishnakumar V."/>
            <person name="Chan A.P."/>
            <person name="Thibaud-Nissen F."/>
            <person name="Schobel S."/>
            <person name="Town C.D."/>
        </authorList>
    </citation>
    <scope>GENOME REANNOTATION</scope>
    <source>
        <strain>cv. Columbia</strain>
    </source>
</reference>
<reference key="3">
    <citation type="journal article" date="2003" name="Science">
        <title>Empirical analysis of transcriptional activity in the Arabidopsis genome.</title>
        <authorList>
            <person name="Yamada K."/>
            <person name="Lim J."/>
            <person name="Dale J.M."/>
            <person name="Chen H."/>
            <person name="Shinn P."/>
            <person name="Palm C.J."/>
            <person name="Southwick A.M."/>
            <person name="Wu H.C."/>
            <person name="Kim C.J."/>
            <person name="Nguyen M."/>
            <person name="Pham P.K."/>
            <person name="Cheuk R.F."/>
            <person name="Karlin-Newmann G."/>
            <person name="Liu S.X."/>
            <person name="Lam B."/>
            <person name="Sakano H."/>
            <person name="Wu T."/>
            <person name="Yu G."/>
            <person name="Miranda M."/>
            <person name="Quach H.L."/>
            <person name="Tripp M."/>
            <person name="Chang C.H."/>
            <person name="Lee J.M."/>
            <person name="Toriumi M.J."/>
            <person name="Chan M.M."/>
            <person name="Tang C.C."/>
            <person name="Onodera C.S."/>
            <person name="Deng J.M."/>
            <person name="Akiyama K."/>
            <person name="Ansari Y."/>
            <person name="Arakawa T."/>
            <person name="Banh J."/>
            <person name="Banno F."/>
            <person name="Bowser L."/>
            <person name="Brooks S.Y."/>
            <person name="Carninci P."/>
            <person name="Chao Q."/>
            <person name="Choy N."/>
            <person name="Enju A."/>
            <person name="Goldsmith A.D."/>
            <person name="Gurjal M."/>
            <person name="Hansen N.F."/>
            <person name="Hayashizaki Y."/>
            <person name="Johnson-Hopson C."/>
            <person name="Hsuan V.W."/>
            <person name="Iida K."/>
            <person name="Karnes M."/>
            <person name="Khan S."/>
            <person name="Koesema E."/>
            <person name="Ishida J."/>
            <person name="Jiang P.X."/>
            <person name="Jones T."/>
            <person name="Kawai J."/>
            <person name="Kamiya A."/>
            <person name="Meyers C."/>
            <person name="Nakajima M."/>
            <person name="Narusaka M."/>
            <person name="Seki M."/>
            <person name="Sakurai T."/>
            <person name="Satou M."/>
            <person name="Tamse R."/>
            <person name="Vaysberg M."/>
            <person name="Wallender E.K."/>
            <person name="Wong C."/>
            <person name="Yamamura Y."/>
            <person name="Yuan S."/>
            <person name="Shinozaki K."/>
            <person name="Davis R.W."/>
            <person name="Theologis A."/>
            <person name="Ecker J.R."/>
        </authorList>
    </citation>
    <scope>NUCLEOTIDE SEQUENCE [LARGE SCALE MRNA]</scope>
    <source>
        <strain>cv. Columbia</strain>
    </source>
</reference>
<reference key="4">
    <citation type="submission" date="2004-09" db="EMBL/GenBank/DDBJ databases">
        <title>Large-scale analysis of RIKEN Arabidopsis full-length (RAFL) cDNAs.</title>
        <authorList>
            <person name="Totoki Y."/>
            <person name="Seki M."/>
            <person name="Ishida J."/>
            <person name="Nakajima M."/>
            <person name="Enju A."/>
            <person name="Kamiya A."/>
            <person name="Narusaka M."/>
            <person name="Shin-i T."/>
            <person name="Nakagawa M."/>
            <person name="Sakamoto N."/>
            <person name="Oishi K."/>
            <person name="Kohara Y."/>
            <person name="Kobayashi M."/>
            <person name="Toyoda A."/>
            <person name="Sakaki Y."/>
            <person name="Sakurai T."/>
            <person name="Iida K."/>
            <person name="Akiyama K."/>
            <person name="Satou M."/>
            <person name="Toyoda T."/>
            <person name="Konagaya A."/>
            <person name="Carninci P."/>
            <person name="Kawai J."/>
            <person name="Hayashizaki Y."/>
            <person name="Shinozaki K."/>
        </authorList>
    </citation>
    <scope>NUCLEOTIDE SEQUENCE [LARGE SCALE MRNA]</scope>
    <source>
        <strain>cv. Columbia</strain>
    </source>
</reference>
<reference key="5">
    <citation type="submission" date="2002-03" db="EMBL/GenBank/DDBJ databases">
        <title>Full-length cDNA from Arabidopsis thaliana.</title>
        <authorList>
            <person name="Brover V.V."/>
            <person name="Troukhan M.E."/>
            <person name="Alexandrov N.A."/>
            <person name="Lu Y.-P."/>
            <person name="Flavell R.B."/>
            <person name="Feldmann K.A."/>
        </authorList>
    </citation>
    <scope>NUCLEOTIDE SEQUENCE [LARGE SCALE MRNA]</scope>
</reference>
<reference key="6">
    <citation type="journal article" date="2010" name="Proc. Natl. Acad. Sci. U.S.A.">
        <title>Plant homologs of the Plasmodium falciparum chloroquine-resistance transporter, PfCRT, are required for glutathione homeostasis and stress responses.</title>
        <authorList>
            <person name="Maughan S.C."/>
            <person name="Pasternak M."/>
            <person name="Cairns N."/>
            <person name="Kiddle G."/>
            <person name="Brach T."/>
            <person name="Jarvis R."/>
            <person name="Haas F."/>
            <person name="Nieuwland J."/>
            <person name="Lim B."/>
            <person name="Muller C."/>
            <person name="Salcedo-Sora E."/>
            <person name="Kruse C."/>
            <person name="Orsel M."/>
            <person name="Hell R."/>
            <person name="Miller A.J."/>
            <person name="Bray P."/>
            <person name="Foyer C.H."/>
            <person name="Murray J.A."/>
            <person name="Meyer A.J."/>
            <person name="Cobbett C.S."/>
        </authorList>
    </citation>
    <scope>FUNCTION</scope>
    <scope>DISRUPTION PHENOTYPE</scope>
    <scope>SUBCELLULAR LOCATION</scope>
</reference>
<reference key="7">
    <citation type="journal article" date="2013" name="Front. Plant Sci.">
        <title>A phenomics approach to the analysis of the influence of glutathione on leaf area and abiotic stress tolerance in Arabidopsis thaliana.</title>
        <authorList>
            <person name="Schnaubelt D."/>
            <person name="Schulz P."/>
            <person name="Hannah M.A."/>
            <person name="Yocgo R.E."/>
            <person name="Foyer C.H."/>
        </authorList>
    </citation>
    <scope>DISRUPTION PHENOTYPE</scope>
</reference>
<proteinExistence type="evidence at transcript level"/>
<feature type="transit peptide" description="Chloroplast" evidence="1">
    <location>
        <begin position="1"/>
        <end position="34"/>
    </location>
</feature>
<feature type="chain" id="PRO_0000433248" description="Protein CLT3, chloroplastic" evidence="1">
    <location>
        <begin position="35"/>
        <end position="452"/>
    </location>
</feature>
<feature type="transmembrane region" description="Helical" evidence="1">
    <location>
        <begin position="105"/>
        <end position="125"/>
    </location>
</feature>
<feature type="transmembrane region" description="Helical" evidence="1">
    <location>
        <begin position="137"/>
        <end position="157"/>
    </location>
</feature>
<feature type="transmembrane region" description="Helical" evidence="1">
    <location>
        <begin position="175"/>
        <end position="195"/>
    </location>
</feature>
<feature type="transmembrane region" description="Helical" evidence="1">
    <location>
        <begin position="202"/>
        <end position="222"/>
    </location>
</feature>
<feature type="transmembrane region" description="Helical" evidence="1">
    <location>
        <begin position="230"/>
        <end position="250"/>
    </location>
</feature>
<feature type="transmembrane region" description="Helical" evidence="1">
    <location>
        <begin position="258"/>
        <end position="278"/>
    </location>
</feature>
<feature type="transmembrane region" description="Helical" evidence="1">
    <location>
        <begin position="307"/>
        <end position="327"/>
    </location>
</feature>
<feature type="transmembrane region" description="Helical" evidence="1">
    <location>
        <begin position="353"/>
        <end position="373"/>
    </location>
</feature>
<feature type="transmembrane region" description="Helical" evidence="1">
    <location>
        <begin position="389"/>
        <end position="409"/>
    </location>
</feature>
<feature type="transmembrane region" description="Helical" evidence="1">
    <location>
        <begin position="412"/>
        <end position="432"/>
    </location>
</feature>
<feature type="sequence conflict" description="In Ref. 5; AAM60923." evidence="5" ref="5">
    <original>G</original>
    <variation>E</variation>
    <location>
        <position position="62"/>
    </location>
</feature>
<feature type="sequence conflict" description="In Ref. 5; AAM60923." evidence="5" ref="5">
    <original>G</original>
    <variation>S</variation>
    <location>
        <position position="304"/>
    </location>
</feature>
<protein>
    <recommendedName>
        <fullName evidence="4">Protein CLT3, chloroplastic</fullName>
    </recommendedName>
    <alternativeName>
        <fullName evidence="4">CRT-like transporter 3</fullName>
    </alternativeName>
    <alternativeName>
        <fullName evidence="4">Chloroquine-resistance transporter-like transporter 3</fullName>
    </alternativeName>
</protein>
<accession>Q8RWL5</accession>
<accession>Q8LGC9</accession>
<accession>Q9FMP6</accession>
<accession>Q9FMP7</accession>
<name>CLT3_ARATH</name>